<dbReference type="EC" id="2.8.1.6" evidence="1"/>
<dbReference type="EMBL" id="CP000485">
    <property type="protein sequence ID" value="ABK86959.1"/>
    <property type="molecule type" value="Genomic_DNA"/>
</dbReference>
<dbReference type="RefSeq" id="WP_000815843.1">
    <property type="nucleotide sequence ID" value="NC_008600.1"/>
</dbReference>
<dbReference type="SMR" id="A0RIB6"/>
<dbReference type="KEGG" id="btl:BALH_3730"/>
<dbReference type="HOGENOM" id="CLU_033172_2_1_9"/>
<dbReference type="UniPathway" id="UPA00078">
    <property type="reaction ID" value="UER00162"/>
</dbReference>
<dbReference type="GO" id="GO:0051537">
    <property type="term" value="F:2 iron, 2 sulfur cluster binding"/>
    <property type="evidence" value="ECO:0007669"/>
    <property type="project" value="UniProtKB-KW"/>
</dbReference>
<dbReference type="GO" id="GO:0051539">
    <property type="term" value="F:4 iron, 4 sulfur cluster binding"/>
    <property type="evidence" value="ECO:0007669"/>
    <property type="project" value="UniProtKB-KW"/>
</dbReference>
<dbReference type="GO" id="GO:0004076">
    <property type="term" value="F:biotin synthase activity"/>
    <property type="evidence" value="ECO:0007669"/>
    <property type="project" value="UniProtKB-UniRule"/>
</dbReference>
<dbReference type="GO" id="GO:0005506">
    <property type="term" value="F:iron ion binding"/>
    <property type="evidence" value="ECO:0007669"/>
    <property type="project" value="UniProtKB-UniRule"/>
</dbReference>
<dbReference type="GO" id="GO:0009102">
    <property type="term" value="P:biotin biosynthetic process"/>
    <property type="evidence" value="ECO:0007669"/>
    <property type="project" value="UniProtKB-UniRule"/>
</dbReference>
<dbReference type="CDD" id="cd01335">
    <property type="entry name" value="Radical_SAM"/>
    <property type="match status" value="1"/>
</dbReference>
<dbReference type="FunFam" id="3.20.20.70:FF:000026">
    <property type="entry name" value="Biotin synthase"/>
    <property type="match status" value="1"/>
</dbReference>
<dbReference type="Gene3D" id="3.20.20.70">
    <property type="entry name" value="Aldolase class I"/>
    <property type="match status" value="1"/>
</dbReference>
<dbReference type="HAMAP" id="MF_01694">
    <property type="entry name" value="BioB"/>
    <property type="match status" value="1"/>
</dbReference>
<dbReference type="InterPro" id="IPR013785">
    <property type="entry name" value="Aldolase_TIM"/>
</dbReference>
<dbReference type="InterPro" id="IPR010722">
    <property type="entry name" value="BATS_dom"/>
</dbReference>
<dbReference type="InterPro" id="IPR002684">
    <property type="entry name" value="Biotin_synth/BioAB"/>
</dbReference>
<dbReference type="InterPro" id="IPR024177">
    <property type="entry name" value="Biotin_synthase"/>
</dbReference>
<dbReference type="InterPro" id="IPR006638">
    <property type="entry name" value="Elp3/MiaA/NifB-like_rSAM"/>
</dbReference>
<dbReference type="InterPro" id="IPR007197">
    <property type="entry name" value="rSAM"/>
</dbReference>
<dbReference type="NCBIfam" id="TIGR00433">
    <property type="entry name" value="bioB"/>
    <property type="match status" value="1"/>
</dbReference>
<dbReference type="PANTHER" id="PTHR22976">
    <property type="entry name" value="BIOTIN SYNTHASE"/>
    <property type="match status" value="1"/>
</dbReference>
<dbReference type="PANTHER" id="PTHR22976:SF2">
    <property type="entry name" value="BIOTIN SYNTHASE, MITOCHONDRIAL"/>
    <property type="match status" value="1"/>
</dbReference>
<dbReference type="Pfam" id="PF06968">
    <property type="entry name" value="BATS"/>
    <property type="match status" value="1"/>
</dbReference>
<dbReference type="Pfam" id="PF04055">
    <property type="entry name" value="Radical_SAM"/>
    <property type="match status" value="1"/>
</dbReference>
<dbReference type="PIRSF" id="PIRSF001619">
    <property type="entry name" value="Biotin_synth"/>
    <property type="match status" value="1"/>
</dbReference>
<dbReference type="SFLD" id="SFLDG01060">
    <property type="entry name" value="BATS_domain_containing"/>
    <property type="match status" value="1"/>
</dbReference>
<dbReference type="SFLD" id="SFLDG01278">
    <property type="entry name" value="biotin_synthase_like"/>
    <property type="match status" value="1"/>
</dbReference>
<dbReference type="SMART" id="SM00876">
    <property type="entry name" value="BATS"/>
    <property type="match status" value="1"/>
</dbReference>
<dbReference type="SMART" id="SM00729">
    <property type="entry name" value="Elp3"/>
    <property type="match status" value="1"/>
</dbReference>
<dbReference type="SUPFAM" id="SSF102114">
    <property type="entry name" value="Radical SAM enzymes"/>
    <property type="match status" value="1"/>
</dbReference>
<dbReference type="PROSITE" id="PS51918">
    <property type="entry name" value="RADICAL_SAM"/>
    <property type="match status" value="1"/>
</dbReference>
<evidence type="ECO:0000255" key="1">
    <source>
        <dbReference type="HAMAP-Rule" id="MF_01694"/>
    </source>
</evidence>
<evidence type="ECO:0000255" key="2">
    <source>
        <dbReference type="PROSITE-ProRule" id="PRU01266"/>
    </source>
</evidence>
<accession>A0RIB6</accession>
<sequence>MKQVQTKRDWKKLAYDVVEEKMIAKEDAIAILEAEDTEVLEIMNAAYIIRHHYFGKKVKLNMIINTKSGLCPEDCGYCSQSIISEAPIDKYAWLTQEKIVEGAHEAIRRKAGTYCIVASGRRPTDKEVNHVIGAVKEIRETTDLKICCCLGFLNEDQAGRLAEAGVHRYNHNLNTHANNYENICSTHTYDDRVDTVQKAKQAGISPCSGAIFGMGETIEERAEIAFELQRIDADSIPCNFLVAVKGTPLEGQKELTPVECLKVLAMMRFVNPTKEIRISGGREINLRSVQPIGLFAANSIFVGDYLTTAGQEPTADWGMIEDLGFEIEECAL</sequence>
<name>BIOB_BACAH</name>
<gene>
    <name evidence="1" type="primary">bioB</name>
    <name type="ordered locus">BALH_3730</name>
</gene>
<proteinExistence type="inferred from homology"/>
<feature type="chain" id="PRO_0000381215" description="Biotin synthase">
    <location>
        <begin position="1"/>
        <end position="332"/>
    </location>
</feature>
<feature type="domain" description="Radical SAM core" evidence="2">
    <location>
        <begin position="53"/>
        <end position="282"/>
    </location>
</feature>
<feature type="binding site" evidence="1">
    <location>
        <position position="71"/>
    </location>
    <ligand>
        <name>[4Fe-4S] cluster</name>
        <dbReference type="ChEBI" id="CHEBI:49883"/>
        <note>4Fe-4S-S-AdoMet</note>
    </ligand>
</feature>
<feature type="binding site" evidence="1">
    <location>
        <position position="75"/>
    </location>
    <ligand>
        <name>[4Fe-4S] cluster</name>
        <dbReference type="ChEBI" id="CHEBI:49883"/>
        <note>4Fe-4S-S-AdoMet</note>
    </ligand>
</feature>
<feature type="binding site" evidence="1">
    <location>
        <position position="78"/>
    </location>
    <ligand>
        <name>[4Fe-4S] cluster</name>
        <dbReference type="ChEBI" id="CHEBI:49883"/>
        <note>4Fe-4S-S-AdoMet</note>
    </ligand>
</feature>
<feature type="binding site" evidence="1">
    <location>
        <position position="115"/>
    </location>
    <ligand>
        <name>[2Fe-2S] cluster</name>
        <dbReference type="ChEBI" id="CHEBI:190135"/>
    </ligand>
</feature>
<feature type="binding site" evidence="1">
    <location>
        <position position="147"/>
    </location>
    <ligand>
        <name>[2Fe-2S] cluster</name>
        <dbReference type="ChEBI" id="CHEBI:190135"/>
    </ligand>
</feature>
<feature type="binding site" evidence="1">
    <location>
        <position position="207"/>
    </location>
    <ligand>
        <name>[2Fe-2S] cluster</name>
        <dbReference type="ChEBI" id="CHEBI:190135"/>
    </ligand>
</feature>
<feature type="binding site" evidence="1">
    <location>
        <position position="277"/>
    </location>
    <ligand>
        <name>[2Fe-2S] cluster</name>
        <dbReference type="ChEBI" id="CHEBI:190135"/>
    </ligand>
</feature>
<keyword id="KW-0001">2Fe-2S</keyword>
<keyword id="KW-0004">4Fe-4S</keyword>
<keyword id="KW-0093">Biotin biosynthesis</keyword>
<keyword id="KW-0408">Iron</keyword>
<keyword id="KW-0411">Iron-sulfur</keyword>
<keyword id="KW-0479">Metal-binding</keyword>
<keyword id="KW-0949">S-adenosyl-L-methionine</keyword>
<keyword id="KW-0808">Transferase</keyword>
<reference key="1">
    <citation type="journal article" date="2007" name="J. Bacteriol.">
        <title>The complete genome sequence of Bacillus thuringiensis Al Hakam.</title>
        <authorList>
            <person name="Challacombe J.F."/>
            <person name="Altherr M.R."/>
            <person name="Xie G."/>
            <person name="Bhotika S.S."/>
            <person name="Brown N."/>
            <person name="Bruce D."/>
            <person name="Campbell C.S."/>
            <person name="Campbell M.L."/>
            <person name="Chen J."/>
            <person name="Chertkov O."/>
            <person name="Cleland C."/>
            <person name="Dimitrijevic M."/>
            <person name="Doggett N.A."/>
            <person name="Fawcett J.J."/>
            <person name="Glavina T."/>
            <person name="Goodwin L.A."/>
            <person name="Green L.D."/>
            <person name="Han C.S."/>
            <person name="Hill K.K."/>
            <person name="Hitchcock P."/>
            <person name="Jackson P.J."/>
            <person name="Keim P."/>
            <person name="Kewalramani A.R."/>
            <person name="Longmire J."/>
            <person name="Lucas S."/>
            <person name="Malfatti S."/>
            <person name="Martinez D."/>
            <person name="McMurry K."/>
            <person name="Meincke L.J."/>
            <person name="Misra M."/>
            <person name="Moseman B.L."/>
            <person name="Mundt M."/>
            <person name="Munk A.C."/>
            <person name="Okinaka R.T."/>
            <person name="Parson-Quintana B."/>
            <person name="Reilly L.P."/>
            <person name="Richardson P."/>
            <person name="Robinson D.L."/>
            <person name="Saunders E."/>
            <person name="Tapia R."/>
            <person name="Tesmer J.G."/>
            <person name="Thayer N."/>
            <person name="Thompson L.S."/>
            <person name="Tice H."/>
            <person name="Ticknor L.O."/>
            <person name="Wills P.L."/>
            <person name="Gilna P."/>
            <person name="Brettin T.S."/>
        </authorList>
    </citation>
    <scope>NUCLEOTIDE SEQUENCE [LARGE SCALE GENOMIC DNA]</scope>
    <source>
        <strain>Al Hakam</strain>
    </source>
</reference>
<organism>
    <name type="scientific">Bacillus thuringiensis (strain Al Hakam)</name>
    <dbReference type="NCBI Taxonomy" id="412694"/>
    <lineage>
        <taxon>Bacteria</taxon>
        <taxon>Bacillati</taxon>
        <taxon>Bacillota</taxon>
        <taxon>Bacilli</taxon>
        <taxon>Bacillales</taxon>
        <taxon>Bacillaceae</taxon>
        <taxon>Bacillus</taxon>
        <taxon>Bacillus cereus group</taxon>
    </lineage>
</organism>
<protein>
    <recommendedName>
        <fullName evidence="1">Biotin synthase</fullName>
        <ecNumber evidence="1">2.8.1.6</ecNumber>
    </recommendedName>
</protein>
<comment type="function">
    <text evidence="1">Catalyzes the conversion of dethiobiotin (DTB) to biotin by the insertion of a sulfur atom into dethiobiotin via a radical-based mechanism.</text>
</comment>
<comment type="catalytic activity">
    <reaction evidence="1">
        <text>(4R,5S)-dethiobiotin + (sulfur carrier)-SH + 2 reduced [2Fe-2S]-[ferredoxin] + 2 S-adenosyl-L-methionine = (sulfur carrier)-H + biotin + 2 5'-deoxyadenosine + 2 L-methionine + 2 oxidized [2Fe-2S]-[ferredoxin]</text>
        <dbReference type="Rhea" id="RHEA:22060"/>
        <dbReference type="Rhea" id="RHEA-COMP:10000"/>
        <dbReference type="Rhea" id="RHEA-COMP:10001"/>
        <dbReference type="Rhea" id="RHEA-COMP:14737"/>
        <dbReference type="Rhea" id="RHEA-COMP:14739"/>
        <dbReference type="ChEBI" id="CHEBI:17319"/>
        <dbReference type="ChEBI" id="CHEBI:29917"/>
        <dbReference type="ChEBI" id="CHEBI:33737"/>
        <dbReference type="ChEBI" id="CHEBI:33738"/>
        <dbReference type="ChEBI" id="CHEBI:57586"/>
        <dbReference type="ChEBI" id="CHEBI:57844"/>
        <dbReference type="ChEBI" id="CHEBI:59789"/>
        <dbReference type="ChEBI" id="CHEBI:64428"/>
        <dbReference type="ChEBI" id="CHEBI:149473"/>
        <dbReference type="EC" id="2.8.1.6"/>
    </reaction>
</comment>
<comment type="cofactor">
    <cofactor evidence="1">
        <name>[4Fe-4S] cluster</name>
        <dbReference type="ChEBI" id="CHEBI:49883"/>
    </cofactor>
    <text evidence="1">Binds 1 [4Fe-4S] cluster. The cluster is coordinated with 3 cysteines and an exchangeable S-adenosyl-L-methionine.</text>
</comment>
<comment type="cofactor">
    <cofactor evidence="1">
        <name>[2Fe-2S] cluster</name>
        <dbReference type="ChEBI" id="CHEBI:190135"/>
    </cofactor>
    <text evidence="1">Binds 1 [2Fe-2S] cluster. The cluster is coordinated with 3 cysteines and 1 arginine.</text>
</comment>
<comment type="pathway">
    <text evidence="1">Cofactor biosynthesis; biotin biosynthesis; biotin from 7,8-diaminononanoate: step 2/2.</text>
</comment>
<comment type="subunit">
    <text evidence="1">Homodimer.</text>
</comment>
<comment type="similarity">
    <text evidence="1">Belongs to the radical SAM superfamily. Biotin synthase family.</text>
</comment>